<organismHost>
    <name type="scientific">Homo sapiens</name>
    <name type="common">Human</name>
    <dbReference type="NCBI Taxonomy" id="9606"/>
</organismHost>
<sequence>MARARRVKRDSVTHIYQTCKQAGTCPSDVVNKVEQTTVADNILKYGSAGVFFGGLGIGTGRGTGGATGYVPLGEGPGVRVGGTPTVVRPSLVPEAIGPVDILPIDTIAPVEPTASSLVPLTESSGADLLPGEVETIAEIHPIPEGPTIDSPVVTTTTGSSAVLEVAPEPVPPTRVRIARTQYHNPSFQILTESTPAQGESSLADHILVTSGSGGQRIGGDITDEIELTEFPSRYTFEIEEPTPPRKSSTPLQTVASAVRRRGFSLTNRRLVQQVAVDNPLFLSQPSKMVRFSFDNPAFEEEVTNIFEQDVNSFEEPPDRDFLDIKQLGRPQYSTTPAGYIRVSRLGTRGTIRTRSGAQIGSQVHFYRDLSSINTEDPIELQLLGQHSGDATIVQGPVESTFIDMDIAENPLSETIDASSNDLLLDETVEDFSGSQLVIGNRRSTTSYTVPRFETTRSSSYYVQDTDGYYVAYPESRDTIDIIYPTPELPVVVIHTHDNSGDFYLHPSLRRRKRKRKYL</sequence>
<evidence type="ECO:0000255" key="1">
    <source>
        <dbReference type="HAMAP-Rule" id="MF_04003"/>
    </source>
</evidence>
<keyword id="KW-0167">Capsid protein</keyword>
<keyword id="KW-1176">Cytoplasmic inwards viral transport</keyword>
<keyword id="KW-1015">Disulfide bond</keyword>
<keyword id="KW-0238">DNA-binding</keyword>
<keyword id="KW-1039">Host endosome</keyword>
<keyword id="KW-1040">Host Golgi apparatus</keyword>
<keyword id="KW-1048">Host nucleus</keyword>
<keyword id="KW-0945">Host-virus interaction</keyword>
<keyword id="KW-0426">Late protein</keyword>
<keyword id="KW-1177">Microtubular inwards viral transport</keyword>
<keyword id="KW-0597">Phosphoprotein</keyword>
<keyword id="KW-1163">Viral penetration into host nucleus</keyword>
<keyword id="KW-0946">Virion</keyword>
<keyword id="KW-1160">Virus entry into host cell</keyword>
<feature type="chain" id="PRO_0000133613" description="Minor capsid protein L2">
    <location>
        <begin position="1"/>
        <end position="518"/>
    </location>
</feature>
<feature type="short sequence motif" description="Nuclear localization signal" evidence="1">
    <location>
        <begin position="1"/>
        <end position="10"/>
    </location>
</feature>
<feature type="short sequence motif" description="Nuclear localization signal" evidence="1">
    <location>
        <begin position="510"/>
        <end position="517"/>
    </location>
</feature>
<feature type="disulfide bond" evidence="1">
    <location>
        <begin position="19"/>
        <end position="25"/>
    </location>
</feature>
<protein>
    <recommendedName>
        <fullName evidence="1">Minor capsid protein L2</fullName>
    </recommendedName>
</protein>
<organism>
    <name type="scientific">Human papillomavirus 47</name>
    <dbReference type="NCBI Taxonomy" id="10594"/>
    <lineage>
        <taxon>Viruses</taxon>
        <taxon>Monodnaviria</taxon>
        <taxon>Shotokuvirae</taxon>
        <taxon>Cossaviricota</taxon>
        <taxon>Papovaviricetes</taxon>
        <taxon>Zurhausenvirales</taxon>
        <taxon>Papillomaviridae</taxon>
        <taxon>Firstpapillomavirinae</taxon>
        <taxon>Betapapillomavirus</taxon>
        <taxon>Betapapillomavirus 1</taxon>
    </lineage>
</organism>
<gene>
    <name evidence="1" type="primary">L2</name>
</gene>
<proteinExistence type="inferred from homology"/>
<comment type="function">
    <text evidence="1">Minor protein of the capsid that localizes along the inner surface of the virion, within the central cavities beneath the L1 pentamers. Plays a role in capsid stabilization through interaction with the major capsid protein L1. Once the virion enters the host cell, L2 escorts the genomic DNA into the nucleus by promoting escape from the endosomal compartments and traffic through the host Golgi network. Mechanistically, the C-terminus of L2 possesses a cell-penetrating peptide that protudes from the host endosome, interacts with host cytoplasmic retromer cargo and thereby mediates the capsid delivery to the host trans-Golgi network. Plays a role through its interaction with host dynein in the intracellular microtubule-dependent transport of viral capsid toward the nucleus. Mediates the viral genome import into the nucleus through binding to host importins. Once within the nucleus, L2 localizes viral genomes to host PML bodies in order to activate early gene expression for establishment of infection. Later on, promotes late gene expression by interacting with the viral E2 protein and by inhibiting its transcriptional activation functions. During virion assembly, encapsidates the genome by direct interaction with the viral DNA.</text>
</comment>
<comment type="subunit">
    <text evidence="1">Interacts with major capsid protein L1. Interacts with E2; this interaction inhibits E2 transcriptional activity but not the DNA replication function E2. Interacts with host GADD45GIP1. Interacts with host HSPA8; this interaction is required for L2 nuclear translocation. Interacts with host importins KPNB2 and KPNB3. Forms a complex with importin alpha2-beta1 heterodimers via interaction with the importin alpha2 adapter. Interacts with host DYNLT1; this interaction is essential for virus intracellular transport during entry. Interacts (via C-terminus) with host retromer subunits VPS35 and VPS29.</text>
</comment>
<comment type="subcellular location">
    <subcellularLocation>
        <location evidence="1">Virion</location>
    </subcellularLocation>
    <subcellularLocation>
        <location evidence="1">Host nucleus</location>
    </subcellularLocation>
    <subcellularLocation>
        <location evidence="1">Host early endosome</location>
    </subcellularLocation>
    <subcellularLocation>
        <location evidence="1">Host Golgi apparatus</location>
    </subcellularLocation>
</comment>
<comment type="PTM">
    <text evidence="1">Highly phosphorylated.</text>
</comment>
<comment type="similarity">
    <text evidence="1">Belongs to the papillomaviridae L2 protein family.</text>
</comment>
<accession>P22425</accession>
<name>VL2_HPV47</name>
<dbReference type="EMBL" id="M32305">
    <property type="protein sequence ID" value="AAA46981.1"/>
    <property type="molecule type" value="Genomic_DNA"/>
</dbReference>
<dbReference type="PIR" id="F35324">
    <property type="entry name" value="P2WL47"/>
</dbReference>
<dbReference type="Proteomes" id="UP000008697">
    <property type="component" value="Genome"/>
</dbReference>
<dbReference type="GO" id="GO:0043657">
    <property type="term" value="C:host cell"/>
    <property type="evidence" value="ECO:0007669"/>
    <property type="project" value="GOC"/>
</dbReference>
<dbReference type="GO" id="GO:0044174">
    <property type="term" value="C:host cell endosome"/>
    <property type="evidence" value="ECO:0007669"/>
    <property type="project" value="UniProtKB-KW"/>
</dbReference>
<dbReference type="GO" id="GO:0044177">
    <property type="term" value="C:host cell Golgi apparatus"/>
    <property type="evidence" value="ECO:0007669"/>
    <property type="project" value="UniProtKB-SubCell"/>
</dbReference>
<dbReference type="GO" id="GO:0042025">
    <property type="term" value="C:host cell nucleus"/>
    <property type="evidence" value="ECO:0007669"/>
    <property type="project" value="UniProtKB-SubCell"/>
</dbReference>
<dbReference type="GO" id="GO:0019028">
    <property type="term" value="C:viral capsid"/>
    <property type="evidence" value="ECO:0007669"/>
    <property type="project" value="UniProtKB-UniRule"/>
</dbReference>
<dbReference type="GO" id="GO:0003677">
    <property type="term" value="F:DNA binding"/>
    <property type="evidence" value="ECO:0007669"/>
    <property type="project" value="UniProtKB-UniRule"/>
</dbReference>
<dbReference type="GO" id="GO:0005198">
    <property type="term" value="F:structural molecule activity"/>
    <property type="evidence" value="ECO:0007669"/>
    <property type="project" value="UniProtKB-UniRule"/>
</dbReference>
<dbReference type="GO" id="GO:0075521">
    <property type="term" value="P:microtubule-dependent intracellular transport of viral material towards nucleus"/>
    <property type="evidence" value="ECO:0007669"/>
    <property type="project" value="UniProtKB-UniRule"/>
</dbReference>
<dbReference type="GO" id="GO:0046718">
    <property type="term" value="P:symbiont entry into host cell"/>
    <property type="evidence" value="ECO:0007669"/>
    <property type="project" value="UniProtKB-KW"/>
</dbReference>
<dbReference type="GO" id="GO:0075732">
    <property type="term" value="P:viral penetration into host nucleus"/>
    <property type="evidence" value="ECO:0007669"/>
    <property type="project" value="UniProtKB-KW"/>
</dbReference>
<dbReference type="HAMAP" id="MF_04003">
    <property type="entry name" value="PPV_L2"/>
    <property type="match status" value="1"/>
</dbReference>
<dbReference type="InterPro" id="IPR000784">
    <property type="entry name" value="Late_L2"/>
</dbReference>
<dbReference type="Pfam" id="PF00513">
    <property type="entry name" value="Late_protein_L2"/>
    <property type="match status" value="1"/>
</dbReference>
<reference key="1">
    <citation type="journal article" date="1990" name="Virology">
        <title>Genome organization and taxonomic position of human papillomavirus type 47 inferred from its DNA sequence.</title>
        <authorList>
            <person name="Kiyono T."/>
            <person name="Adachi A."/>
            <person name="Ishibashi M."/>
        </authorList>
    </citation>
    <scope>NUCLEOTIDE SEQUENCE [GENOMIC DNA]</scope>
</reference>